<accession>Q3SVB0</accession>
<keyword id="KW-0028">Amino-acid biosynthesis</keyword>
<keyword id="KW-0055">Arginine biosynthesis</keyword>
<keyword id="KW-0963">Cytoplasm</keyword>
<keyword id="KW-1185">Reference proteome</keyword>
<keyword id="KW-0808">Transferase</keyword>
<gene>
    <name evidence="2" type="primary">argF</name>
    <name type="ordered locus">Nwi_0514</name>
</gene>
<name>OTC_NITWN</name>
<comment type="function">
    <text evidence="1">Reversibly catalyzes the transfer of the carbamoyl group from carbamoyl phosphate (CP) to the N(epsilon) atom of ornithine (ORN) to produce L-citrulline.</text>
</comment>
<comment type="catalytic activity">
    <reaction evidence="2">
        <text>carbamoyl phosphate + L-ornithine = L-citrulline + phosphate + H(+)</text>
        <dbReference type="Rhea" id="RHEA:19513"/>
        <dbReference type="ChEBI" id="CHEBI:15378"/>
        <dbReference type="ChEBI" id="CHEBI:43474"/>
        <dbReference type="ChEBI" id="CHEBI:46911"/>
        <dbReference type="ChEBI" id="CHEBI:57743"/>
        <dbReference type="ChEBI" id="CHEBI:58228"/>
        <dbReference type="EC" id="2.1.3.3"/>
    </reaction>
</comment>
<comment type="pathway">
    <text evidence="2">Amino-acid biosynthesis; L-arginine biosynthesis; L-arginine from L-ornithine and carbamoyl phosphate: step 1/3.</text>
</comment>
<comment type="subcellular location">
    <subcellularLocation>
        <location evidence="2">Cytoplasm</location>
    </subcellularLocation>
</comment>
<comment type="similarity">
    <text evidence="2">Belongs to the aspartate/ornithine carbamoyltransferase superfamily. OTCase family.</text>
</comment>
<reference key="1">
    <citation type="journal article" date="2006" name="Appl. Environ. Microbiol.">
        <title>Genome sequence of the chemolithoautotrophic nitrite-oxidizing bacterium Nitrobacter winogradskyi Nb-255.</title>
        <authorList>
            <person name="Starkenburg S.R."/>
            <person name="Chain P.S.G."/>
            <person name="Sayavedra-Soto L.A."/>
            <person name="Hauser L."/>
            <person name="Land M.L."/>
            <person name="Larimer F.W."/>
            <person name="Malfatti S.A."/>
            <person name="Klotz M.G."/>
            <person name="Bottomley P.J."/>
            <person name="Arp D.J."/>
            <person name="Hickey W.J."/>
        </authorList>
    </citation>
    <scope>NUCLEOTIDE SEQUENCE [LARGE SCALE GENOMIC DNA]</scope>
    <source>
        <strain>ATCC 25391 / DSM 10237 / CIP 104748 / NCIMB 11846 / Nb-255</strain>
    </source>
</reference>
<feature type="chain" id="PRO_1000084856" description="Ornithine carbamoyltransferase">
    <location>
        <begin position="1"/>
        <end position="308"/>
    </location>
</feature>
<feature type="binding site" evidence="2">
    <location>
        <begin position="56"/>
        <end position="59"/>
    </location>
    <ligand>
        <name>carbamoyl phosphate</name>
        <dbReference type="ChEBI" id="CHEBI:58228"/>
    </ligand>
</feature>
<feature type="binding site" evidence="2">
    <location>
        <position position="83"/>
    </location>
    <ligand>
        <name>carbamoyl phosphate</name>
        <dbReference type="ChEBI" id="CHEBI:58228"/>
    </ligand>
</feature>
<feature type="binding site" evidence="2">
    <location>
        <position position="107"/>
    </location>
    <ligand>
        <name>carbamoyl phosphate</name>
        <dbReference type="ChEBI" id="CHEBI:58228"/>
    </ligand>
</feature>
<feature type="binding site" evidence="2">
    <location>
        <begin position="134"/>
        <end position="137"/>
    </location>
    <ligand>
        <name>carbamoyl phosphate</name>
        <dbReference type="ChEBI" id="CHEBI:58228"/>
    </ligand>
</feature>
<feature type="binding site" evidence="2">
    <location>
        <position position="165"/>
    </location>
    <ligand>
        <name>L-ornithine</name>
        <dbReference type="ChEBI" id="CHEBI:46911"/>
    </ligand>
</feature>
<feature type="binding site" evidence="2">
    <location>
        <position position="225"/>
    </location>
    <ligand>
        <name>L-ornithine</name>
        <dbReference type="ChEBI" id="CHEBI:46911"/>
    </ligand>
</feature>
<feature type="binding site" evidence="2">
    <location>
        <begin position="229"/>
        <end position="230"/>
    </location>
    <ligand>
        <name>L-ornithine</name>
        <dbReference type="ChEBI" id="CHEBI:46911"/>
    </ligand>
</feature>
<feature type="binding site" evidence="2">
    <location>
        <begin position="264"/>
        <end position="265"/>
    </location>
    <ligand>
        <name>carbamoyl phosphate</name>
        <dbReference type="ChEBI" id="CHEBI:58228"/>
    </ligand>
</feature>
<feature type="binding site" evidence="2">
    <location>
        <position position="292"/>
    </location>
    <ligand>
        <name>carbamoyl phosphate</name>
        <dbReference type="ChEBI" id="CHEBI:58228"/>
    </ligand>
</feature>
<proteinExistence type="inferred from homology"/>
<protein>
    <recommendedName>
        <fullName evidence="2">Ornithine carbamoyltransferase</fullName>
        <shortName evidence="2">OTCase</shortName>
        <ecNumber evidence="2">2.1.3.3</ecNumber>
    </recommendedName>
</protein>
<dbReference type="EC" id="2.1.3.3" evidence="2"/>
<dbReference type="EMBL" id="CP000115">
    <property type="protein sequence ID" value="ABA03781.1"/>
    <property type="molecule type" value="Genomic_DNA"/>
</dbReference>
<dbReference type="RefSeq" id="WP_011313842.1">
    <property type="nucleotide sequence ID" value="NC_007406.1"/>
</dbReference>
<dbReference type="SMR" id="Q3SVB0"/>
<dbReference type="STRING" id="323098.Nwi_0514"/>
<dbReference type="KEGG" id="nwi:Nwi_0514"/>
<dbReference type="eggNOG" id="COG0078">
    <property type="taxonomic scope" value="Bacteria"/>
</dbReference>
<dbReference type="HOGENOM" id="CLU_043846_3_2_5"/>
<dbReference type="OrthoDB" id="9802587at2"/>
<dbReference type="UniPathway" id="UPA00068">
    <property type="reaction ID" value="UER00112"/>
</dbReference>
<dbReference type="Proteomes" id="UP000002531">
    <property type="component" value="Chromosome"/>
</dbReference>
<dbReference type="GO" id="GO:0005737">
    <property type="term" value="C:cytoplasm"/>
    <property type="evidence" value="ECO:0007669"/>
    <property type="project" value="UniProtKB-SubCell"/>
</dbReference>
<dbReference type="GO" id="GO:0016597">
    <property type="term" value="F:amino acid binding"/>
    <property type="evidence" value="ECO:0007669"/>
    <property type="project" value="InterPro"/>
</dbReference>
<dbReference type="GO" id="GO:0004585">
    <property type="term" value="F:ornithine carbamoyltransferase activity"/>
    <property type="evidence" value="ECO:0007669"/>
    <property type="project" value="UniProtKB-UniRule"/>
</dbReference>
<dbReference type="GO" id="GO:0042450">
    <property type="term" value="P:arginine biosynthetic process via ornithine"/>
    <property type="evidence" value="ECO:0007669"/>
    <property type="project" value="TreeGrafter"/>
</dbReference>
<dbReference type="GO" id="GO:0019240">
    <property type="term" value="P:citrulline biosynthetic process"/>
    <property type="evidence" value="ECO:0007669"/>
    <property type="project" value="TreeGrafter"/>
</dbReference>
<dbReference type="GO" id="GO:0006526">
    <property type="term" value="P:L-arginine biosynthetic process"/>
    <property type="evidence" value="ECO:0007669"/>
    <property type="project" value="UniProtKB-UniRule"/>
</dbReference>
<dbReference type="FunFam" id="3.40.50.1370:FF:000008">
    <property type="entry name" value="Ornithine carbamoyltransferase"/>
    <property type="match status" value="1"/>
</dbReference>
<dbReference type="Gene3D" id="3.40.50.1370">
    <property type="entry name" value="Aspartate/ornithine carbamoyltransferase"/>
    <property type="match status" value="2"/>
</dbReference>
<dbReference type="HAMAP" id="MF_01109">
    <property type="entry name" value="OTCase"/>
    <property type="match status" value="1"/>
</dbReference>
<dbReference type="InterPro" id="IPR006132">
    <property type="entry name" value="Asp/Orn_carbamoyltranf_P-bd"/>
</dbReference>
<dbReference type="InterPro" id="IPR006130">
    <property type="entry name" value="Asp/Orn_carbamoylTrfase"/>
</dbReference>
<dbReference type="InterPro" id="IPR036901">
    <property type="entry name" value="Asp/Orn_carbamoylTrfase_sf"/>
</dbReference>
<dbReference type="InterPro" id="IPR006131">
    <property type="entry name" value="Asp_carbamoyltransf_Asp/Orn-bd"/>
</dbReference>
<dbReference type="InterPro" id="IPR002292">
    <property type="entry name" value="Orn/put_carbamltrans"/>
</dbReference>
<dbReference type="InterPro" id="IPR024904">
    <property type="entry name" value="OTCase_ArgI"/>
</dbReference>
<dbReference type="NCBIfam" id="TIGR00658">
    <property type="entry name" value="orni_carb_tr"/>
    <property type="match status" value="1"/>
</dbReference>
<dbReference type="NCBIfam" id="NF001986">
    <property type="entry name" value="PRK00779.1"/>
    <property type="match status" value="1"/>
</dbReference>
<dbReference type="PANTHER" id="PTHR45753">
    <property type="entry name" value="ORNITHINE CARBAMOYLTRANSFERASE, MITOCHONDRIAL"/>
    <property type="match status" value="1"/>
</dbReference>
<dbReference type="PANTHER" id="PTHR45753:SF3">
    <property type="entry name" value="ORNITHINE TRANSCARBAMYLASE, MITOCHONDRIAL"/>
    <property type="match status" value="1"/>
</dbReference>
<dbReference type="Pfam" id="PF00185">
    <property type="entry name" value="OTCace"/>
    <property type="match status" value="1"/>
</dbReference>
<dbReference type="Pfam" id="PF02729">
    <property type="entry name" value="OTCace_N"/>
    <property type="match status" value="1"/>
</dbReference>
<dbReference type="PRINTS" id="PR00100">
    <property type="entry name" value="AOTCASE"/>
</dbReference>
<dbReference type="PRINTS" id="PR00102">
    <property type="entry name" value="OTCASE"/>
</dbReference>
<dbReference type="SUPFAM" id="SSF53671">
    <property type="entry name" value="Aspartate/ornithine carbamoyltransferase"/>
    <property type="match status" value="1"/>
</dbReference>
<dbReference type="PROSITE" id="PS00097">
    <property type="entry name" value="CARBAMOYLTRANSFERASE"/>
    <property type="match status" value="1"/>
</dbReference>
<evidence type="ECO:0000250" key="1"/>
<evidence type="ECO:0000255" key="2">
    <source>
        <dbReference type="HAMAP-Rule" id="MF_01109"/>
    </source>
</evidence>
<organism>
    <name type="scientific">Nitrobacter winogradskyi (strain ATCC 25391 / DSM 10237 / CIP 104748 / NCIMB 11846 / Nb-255)</name>
    <dbReference type="NCBI Taxonomy" id="323098"/>
    <lineage>
        <taxon>Bacteria</taxon>
        <taxon>Pseudomonadati</taxon>
        <taxon>Pseudomonadota</taxon>
        <taxon>Alphaproteobacteria</taxon>
        <taxon>Hyphomicrobiales</taxon>
        <taxon>Nitrobacteraceae</taxon>
        <taxon>Nitrobacter</taxon>
    </lineage>
</organism>
<sequence length="308" mass="33752">MSKAPRHFLDLLDMSTGELRAILDASVAMKKRRKEGLIADKPLAGKTLAMIFDKPSTRTRVSFDVGMRQLGGEAIMLTGAEMQLGRGETIADTAKVLSRFVDIIMIRILSHDALTELAAHATVPVINGLTRRSHPCQVMADVMTFEEHRGPIEGRTVAWTGDDNNVLASWAHAAERFSFNLNVATPQELAPNKPLKDWIRSSGASIRLGTDPEAAVRGADCIVTDTWVSMGDKDGEHRHNLLRPYQVNAELMRLAKSDALFMHCLPAHRGEEVTDEVIDGPQSVVFDEAENRLHAQKGILAWCLGAGG</sequence>